<name>GM_HHV11</name>
<dbReference type="EMBL" id="X14112">
    <property type="protein sequence ID" value="CAA32346.1"/>
    <property type="molecule type" value="Genomic_DNA"/>
</dbReference>
<dbReference type="EMBL" id="X03839">
    <property type="protein sequence ID" value="CAA27451.1"/>
    <property type="molecule type" value="Genomic_DNA"/>
</dbReference>
<dbReference type="EMBL" id="DQ889502">
    <property type="protein sequence ID" value="ABI63472.1"/>
    <property type="molecule type" value="Genomic_DNA"/>
</dbReference>
<dbReference type="EMBL" id="FJ593289">
    <property type="protein sequence ID" value="ACM62232.1"/>
    <property type="molecule type" value="Genomic_DNA"/>
</dbReference>
<dbReference type="EMBL" id="AH002360">
    <property type="protein sequence ID" value="AAA45821.2"/>
    <property type="molecule type" value="Genomic_DNA"/>
</dbReference>
<dbReference type="PIR" id="A03736">
    <property type="entry name" value="WMBE51"/>
</dbReference>
<dbReference type="RefSeq" id="YP_009137084.1">
    <property type="nucleotide sequence ID" value="NC_001806.2"/>
</dbReference>
<dbReference type="SMR" id="P04288"/>
<dbReference type="BioGRID" id="971418">
    <property type="interactions" value="1"/>
</dbReference>
<dbReference type="ChEMBL" id="CHEMBL2364696"/>
<dbReference type="DrugCentral" id="P04288"/>
<dbReference type="TCDB" id="9.B.212.1.1">
    <property type="family name" value="the human simplex virus-1 gm protein (hsv-gm) family"/>
</dbReference>
<dbReference type="DNASU" id="2703379"/>
<dbReference type="GeneID" id="2703379"/>
<dbReference type="KEGG" id="vg:2703379"/>
<dbReference type="PRO" id="PR:P04288"/>
<dbReference type="Proteomes" id="UP000009294">
    <property type="component" value="Segment"/>
</dbReference>
<dbReference type="Proteomes" id="UP000180652">
    <property type="component" value="Segment"/>
</dbReference>
<dbReference type="GO" id="GO:0044175">
    <property type="term" value="C:host cell endosome membrane"/>
    <property type="evidence" value="ECO:0007669"/>
    <property type="project" value="UniProtKB-SubCell"/>
</dbReference>
<dbReference type="GO" id="GO:0044177">
    <property type="term" value="C:host cell Golgi apparatus"/>
    <property type="evidence" value="ECO:0007669"/>
    <property type="project" value="UniProtKB-SubCell"/>
</dbReference>
<dbReference type="GO" id="GO:0044201">
    <property type="term" value="C:host cell nuclear inner membrane"/>
    <property type="evidence" value="ECO:0007669"/>
    <property type="project" value="UniProtKB-SubCell"/>
</dbReference>
<dbReference type="GO" id="GO:0044220">
    <property type="term" value="C:host cell perinuclear region of cytoplasm"/>
    <property type="evidence" value="ECO:0000314"/>
    <property type="project" value="CAFA"/>
</dbReference>
<dbReference type="GO" id="GO:0016020">
    <property type="term" value="C:membrane"/>
    <property type="evidence" value="ECO:0007669"/>
    <property type="project" value="UniProtKB-KW"/>
</dbReference>
<dbReference type="GO" id="GO:0019031">
    <property type="term" value="C:viral envelope"/>
    <property type="evidence" value="ECO:0007669"/>
    <property type="project" value="UniProtKB-KW"/>
</dbReference>
<dbReference type="GO" id="GO:0055036">
    <property type="term" value="C:virion membrane"/>
    <property type="evidence" value="ECO:0007669"/>
    <property type="project" value="UniProtKB-SubCell"/>
</dbReference>
<dbReference type="HAMAP" id="MF_04035">
    <property type="entry name" value="HSV_GM"/>
    <property type="match status" value="1"/>
</dbReference>
<dbReference type="InterPro" id="IPR000785">
    <property type="entry name" value="Herpes_glycop_M"/>
</dbReference>
<dbReference type="Pfam" id="PF01528">
    <property type="entry name" value="Herpes_glycop"/>
    <property type="match status" value="1"/>
</dbReference>
<dbReference type="PRINTS" id="PR00333">
    <property type="entry name" value="HSVINTEGRLMP"/>
</dbReference>
<keyword id="KW-1015">Disulfide bond</keyword>
<keyword id="KW-0325">Glycoprotein</keyword>
<keyword id="KW-1039">Host endosome</keyword>
<keyword id="KW-1040">Host Golgi apparatus</keyword>
<keyword id="KW-1043">Host membrane</keyword>
<keyword id="KW-1048">Host nucleus</keyword>
<keyword id="KW-0472">Membrane</keyword>
<keyword id="KW-1185">Reference proteome</keyword>
<keyword id="KW-0812">Transmembrane</keyword>
<keyword id="KW-1133">Transmembrane helix</keyword>
<keyword id="KW-0261">Viral envelope protein</keyword>
<keyword id="KW-0946">Virion</keyword>
<feature type="chain" id="PRO_0000115775" description="Envelope glycoprotein M">
    <location>
        <begin position="1"/>
        <end position="473"/>
    </location>
</feature>
<feature type="topological domain" description="Intravirion" evidence="1">
    <location>
        <begin position="1"/>
        <end position="32"/>
    </location>
</feature>
<feature type="transmembrane region" description="Helical" evidence="1">
    <location>
        <begin position="33"/>
        <end position="53"/>
    </location>
</feature>
<feature type="topological domain" description="Virion surface" evidence="1">
    <location>
        <begin position="54"/>
        <end position="90"/>
    </location>
</feature>
<feature type="transmembrane region" description="Helical" evidence="1">
    <location>
        <begin position="91"/>
        <end position="111"/>
    </location>
</feature>
<feature type="topological domain" description="Intravirion" evidence="1">
    <location>
        <begin position="112"/>
        <end position="137"/>
    </location>
</feature>
<feature type="transmembrane region" description="Helical" evidence="1">
    <location>
        <begin position="138"/>
        <end position="158"/>
    </location>
</feature>
<feature type="topological domain" description="Virion surface" evidence="1">
    <location>
        <begin position="159"/>
        <end position="163"/>
    </location>
</feature>
<feature type="transmembrane region" description="Helical" evidence="1">
    <location>
        <begin position="164"/>
        <end position="184"/>
    </location>
</feature>
<feature type="topological domain" description="Intravirion" evidence="1">
    <location>
        <begin position="185"/>
        <end position="216"/>
    </location>
</feature>
<feature type="transmembrane region" description="Helical" evidence="1">
    <location>
        <begin position="217"/>
        <end position="237"/>
    </location>
</feature>
<feature type="topological domain" description="Virion surface" evidence="1">
    <location>
        <begin position="238"/>
        <end position="250"/>
    </location>
</feature>
<feature type="transmembrane region" description="Helical" evidence="1">
    <location>
        <begin position="251"/>
        <end position="271"/>
    </location>
</feature>
<feature type="topological domain" description="Intravirion" evidence="1">
    <location>
        <begin position="272"/>
        <end position="280"/>
    </location>
</feature>
<feature type="transmembrane region" description="Helical" evidence="1">
    <location>
        <begin position="281"/>
        <end position="301"/>
    </location>
</feature>
<feature type="topological domain" description="Virion surface" evidence="1">
    <location>
        <begin position="302"/>
        <end position="318"/>
    </location>
</feature>
<feature type="transmembrane region" description="Helical" evidence="1">
    <location>
        <begin position="319"/>
        <end position="339"/>
    </location>
</feature>
<feature type="topological domain" description="Intravirion" evidence="1">
    <location>
        <begin position="340"/>
        <end position="473"/>
    </location>
</feature>
<feature type="region of interest" description="Disordered" evidence="2">
    <location>
        <begin position="371"/>
        <end position="399"/>
    </location>
</feature>
<feature type="region of interest" description="Disordered" evidence="2">
    <location>
        <begin position="440"/>
        <end position="473"/>
    </location>
</feature>
<feature type="disulfide bond" description="Interchain (with gN)" evidence="1">
    <location>
        <position position="59"/>
    </location>
</feature>
<feature type="sequence variant" description="In strain: Nonneuroinvasive mutant HF10.">
    <original>R</original>
    <variation>C</variation>
    <location>
        <position position="77"/>
    </location>
</feature>
<feature type="sequence variant" description="In strain: Nonneuroinvasive mutant HF10.">
    <original>V</original>
    <variation>A</variation>
    <location>
        <position position="105"/>
    </location>
</feature>
<feature type="sequence variant" description="In STRAIN: 17 syn+.">
    <original>V</original>
    <variation>M</variation>
    <location>
        <position position="279"/>
    </location>
</feature>
<feature type="sequence variant" description="In strain: Nonneuroinvasive mutant HF10.">
    <original>D</original>
    <variation>E</variation>
    <location>
        <position position="448"/>
    </location>
</feature>
<feature type="sequence variant" description="In strain: Nonneuroinvasive mutant HF10.">
    <original>A</original>
    <variation>T</variation>
    <location>
        <position position="462"/>
    </location>
</feature>
<accession>P04288</accession>
<accession>B9VQD7</accession>
<accession>Q09IC3</accession>
<organism>
    <name type="scientific">Human herpesvirus 1 (strain 17)</name>
    <name type="common">HHV-1</name>
    <name type="synonym">Human herpes simplex virus 1</name>
    <dbReference type="NCBI Taxonomy" id="10299"/>
    <lineage>
        <taxon>Viruses</taxon>
        <taxon>Duplodnaviria</taxon>
        <taxon>Heunggongvirae</taxon>
        <taxon>Peploviricota</taxon>
        <taxon>Herviviricetes</taxon>
        <taxon>Herpesvirales</taxon>
        <taxon>Orthoherpesviridae</taxon>
        <taxon>Alphaherpesvirinae</taxon>
        <taxon>Simplexvirus</taxon>
        <taxon>Simplexvirus humanalpha1</taxon>
        <taxon>Human herpesvirus 1</taxon>
    </lineage>
</organism>
<gene>
    <name evidence="1" type="primary">gM</name>
    <name type="ORF">UL10</name>
</gene>
<organismHost>
    <name type="scientific">Homo sapiens</name>
    <name type="common">Human</name>
    <dbReference type="NCBI Taxonomy" id="9606"/>
</organismHost>
<evidence type="ECO:0000255" key="1">
    <source>
        <dbReference type="HAMAP-Rule" id="MF_04035"/>
    </source>
</evidence>
<evidence type="ECO:0000256" key="2">
    <source>
        <dbReference type="SAM" id="MobiDB-lite"/>
    </source>
</evidence>
<evidence type="ECO:0000269" key="3">
    <source>
    </source>
</evidence>
<evidence type="ECO:0000269" key="4">
    <source>
    </source>
</evidence>
<sequence>MGRPAPRGSPDSAPPTKGMTGARTAWWVWCVQVATFVVSAVCVTGLLVLASVFRARFPCFYATASSYAGVNSTAEVRGGVAVPLRLDTQSLVGTYVITAVLLLAVAVYAVVGAVTSRYDRALDAGRRLAAARMAMPHATLIAGNVCSWLLQITVLLLAHRISQLAHLVYVLHFACLVYFAAHFCTRGVLSGTYLRQVHGLMELAPTHHRVVGPARAVLTNALLLGVFLCTADAAVSLNTIAAFNFNFSAPGMLICLTVLFAILVVSLLLVVEGVLCHYVRVLVGPHLGAVAATGIVGLACEHYYTNGYYVVETQWPGAQTGVRVALALVAAFALGMAVLRCTRAYLYHRRHHTKFFMRMRDTRHRAHSALKRVRSSMRGSRDGRHRPAPGSPPGIPEYAEDPYAISYGGQLDRYGDSDGEPIYDEVADDQTDVLYAKIQHPRHLPDDDPIYDTVGGYDPEPAEDPVYSTVRRW</sequence>
<protein>
    <recommendedName>
        <fullName evidence="1">Envelope glycoprotein M</fullName>
        <shortName evidence="1">gM</shortName>
    </recommendedName>
</protein>
<reference key="1">
    <citation type="journal article" date="1986" name="Nucleic Acids Res.">
        <title>DNA sequence of the region in the genome of herpes simplex virus type 1 containing the exonuclease gene and neighbouring genes.</title>
        <authorList>
            <person name="McGeoch D.J."/>
            <person name="Dolan A."/>
            <person name="Frame M.C."/>
        </authorList>
    </citation>
    <scope>NUCLEOTIDE SEQUENCE [GENOMIC DNA]</scope>
</reference>
<reference key="2">
    <citation type="journal article" date="1988" name="J. Gen. Virol.">
        <title>The complete DNA sequence of the long unique region in the genome of herpes simplex virus type 1.</title>
        <authorList>
            <person name="McGeoch D.J."/>
            <person name="Dalrymple M.A."/>
            <person name="Davison A.J."/>
            <person name="Dolan A."/>
            <person name="Frame M.C."/>
            <person name="McNab D."/>
            <person name="Perry L.J."/>
            <person name="Scott J.E."/>
            <person name="Taylor P."/>
        </authorList>
    </citation>
    <scope>NUCLEOTIDE SEQUENCE [LARGE SCALE GENOMIC DNA]</scope>
</reference>
<reference key="3">
    <citation type="journal article" date="2007" name="Microbes Infect.">
        <title>Determination and analysis of the DNA sequence of highly attenuated herpes simplex virus type 1 mutant HF10, a potential oncolytic virus.</title>
        <authorList>
            <person name="Ushijima Y."/>
            <person name="Luo C."/>
            <person name="Goshima F."/>
            <person name="Yamauchi Y."/>
            <person name="Kimura H."/>
            <person name="Nishiyama Y."/>
        </authorList>
    </citation>
    <scope>NUCLEOTIDE SEQUENCE [LARGE SCALE GENOMIC DNA]</scope>
    <source>
        <strain>Nonneuroinvasive mutant HF10</strain>
    </source>
</reference>
<reference key="4">
    <citation type="submission" date="2008-12" db="EMBL/GenBank/DDBJ databases">
        <title>Herpes simplex virus type 1 bacterial artificial chromosome.</title>
        <authorList>
            <person name="Cunningham C."/>
            <person name="Davison A.J."/>
        </authorList>
    </citation>
    <scope>NUCLEOTIDE SEQUENCE [LARGE SCALE GENOMIC DNA]</scope>
    <source>
        <strain>17 syn+</strain>
    </source>
</reference>
<reference key="5">
    <citation type="journal article" date="1988" name="J. Virol.">
        <title>Structures of herpes simplex virus type 1 genes required for replication of virus DNA.</title>
        <authorList>
            <person name="McGeoch D.J."/>
            <person name="Dalrymple M.A."/>
            <person name="Dolan A."/>
            <person name="McNab D."/>
            <person name="Perry L.J."/>
            <person name="Taylor P."/>
            <person name="Challberg M.D."/>
        </authorList>
    </citation>
    <scope>NUCLEOTIDE SEQUENCE [GENOMIC DNA] OF 1-98</scope>
</reference>
<reference key="6">
    <citation type="journal article" date="2007" name="J. Virol.">
        <title>Glycoprotein M of herpes simplex virus 1 is incorporated into virions during budding at the inner nuclear membrane.</title>
        <authorList>
            <person name="Baines J.D."/>
            <person name="Wills E."/>
            <person name="Jacob R.J."/>
            <person name="Pennington J."/>
            <person name="Roizman B."/>
        </authorList>
    </citation>
    <scope>SUBCELLULAR LOCATION</scope>
    <source>
        <strain>F</strain>
    </source>
</reference>
<reference key="7">
    <citation type="journal article" date="2008" name="J. Virol.">
        <title>Comprehensive characterization of extracellular herpes simplex virus type 1 virions.</title>
        <authorList>
            <person name="Loret S."/>
            <person name="Guay G."/>
            <person name="Lippe R."/>
        </authorList>
    </citation>
    <scope>SUBCELLULAR LOCATION</scope>
    <source>
        <strain>F</strain>
    </source>
</reference>
<reference key="8">
    <citation type="journal article" date="2009" name="J. Virol.">
        <title>The U(L)31 and U(L)34 gene products of herpes simplex virus 1 are required for optimal localization of viral glycoproteins D and M to the inner nuclear membranes of infected cells.</title>
        <authorList>
            <person name="Wills E."/>
            <person name="Mou F."/>
            <person name="Baines J.D."/>
        </authorList>
    </citation>
    <scope>SUBCELLULAR LOCATION</scope>
    <source>
        <strain>F</strain>
    </source>
</reference>
<reference key="9">
    <citation type="journal article" date="2016" name="Viruses">
        <title>Subcellular trafficking and functional relationship of the HSV-1 glycoproteins N and M.</title>
        <authorList>
            <person name="Striebinger H."/>
            <person name="Funk C."/>
            <person name="Raschbichler V."/>
            <person name="Bailer S.M."/>
        </authorList>
    </citation>
    <scope>INTERACTION WITH GN</scope>
    <scope>SUBCELLULAR LOCATION</scope>
    <scope>FUNCTION</scope>
</reference>
<proteinExistence type="evidence at protein level"/>
<comment type="function">
    <text evidence="1 4">Envelope glycoprotein important for virion assembly and egress. Plays a role in the correct incorporation of gH-gL into virion membrane. Directs the glycoprotein N (gN) to the host trans-Golgi network.</text>
</comment>
<comment type="subunit">
    <text evidence="1 4">Interacts (via N-terminus) with gN (via N-terminus). The gM-gN heterodimer forms the gCII complex.</text>
</comment>
<comment type="subcellular location">
    <subcellularLocation>
        <location evidence="1">Virion membrane</location>
        <topology evidence="1">Multi-pass membrane protein</topology>
    </subcellularLocation>
    <subcellularLocation>
        <location evidence="1 4">Host Golgi apparatus</location>
        <location evidence="1 4">Host trans-Golgi network</location>
    </subcellularLocation>
    <subcellularLocation>
        <location evidence="1">Host endosome membrane</location>
        <topology evidence="1">Multi-pass membrane protein</topology>
    </subcellularLocation>
    <subcellularLocation>
        <location evidence="1 3">Host nucleus inner membrane</location>
        <topology evidence="1">Multi-pass membrane protein</topology>
    </subcellularLocation>
    <text evidence="1 3">During virion morphogenesis, this protein accumulates in the trans-Golgi network where secondary envelopment occurs.</text>
</comment>
<comment type="similarity">
    <text evidence="1">Belongs to the herpesviridae glycoprotein M family.</text>
</comment>